<proteinExistence type="inferred from homology"/>
<dbReference type="EMBL" id="BX571856">
    <property type="protein sequence ID" value="CAG40593.1"/>
    <property type="molecule type" value="Genomic_DNA"/>
</dbReference>
<dbReference type="RefSeq" id="WP_001124985.1">
    <property type="nucleotide sequence ID" value="NC_002952.2"/>
</dbReference>
<dbReference type="SMR" id="Q6GGH8"/>
<dbReference type="GeneID" id="98345891"/>
<dbReference type="KEGG" id="sar:SAR1598"/>
<dbReference type="HOGENOM" id="CLU_097103_3_0_9"/>
<dbReference type="UniPathway" id="UPA00068"/>
<dbReference type="Proteomes" id="UP000000596">
    <property type="component" value="Chromosome"/>
</dbReference>
<dbReference type="GO" id="GO:0005737">
    <property type="term" value="C:cytoplasm"/>
    <property type="evidence" value="ECO:0007669"/>
    <property type="project" value="UniProtKB-SubCell"/>
</dbReference>
<dbReference type="GO" id="GO:0034618">
    <property type="term" value="F:arginine binding"/>
    <property type="evidence" value="ECO:0007669"/>
    <property type="project" value="InterPro"/>
</dbReference>
<dbReference type="GO" id="GO:0003677">
    <property type="term" value="F:DNA binding"/>
    <property type="evidence" value="ECO:0007669"/>
    <property type="project" value="UniProtKB-KW"/>
</dbReference>
<dbReference type="GO" id="GO:0003700">
    <property type="term" value="F:DNA-binding transcription factor activity"/>
    <property type="evidence" value="ECO:0007669"/>
    <property type="project" value="UniProtKB-UniRule"/>
</dbReference>
<dbReference type="GO" id="GO:0006526">
    <property type="term" value="P:L-arginine biosynthetic process"/>
    <property type="evidence" value="ECO:0007669"/>
    <property type="project" value="UniProtKB-UniPathway"/>
</dbReference>
<dbReference type="GO" id="GO:0051259">
    <property type="term" value="P:protein complex oligomerization"/>
    <property type="evidence" value="ECO:0007669"/>
    <property type="project" value="InterPro"/>
</dbReference>
<dbReference type="GO" id="GO:1900079">
    <property type="term" value="P:regulation of arginine biosynthetic process"/>
    <property type="evidence" value="ECO:0007669"/>
    <property type="project" value="UniProtKB-UniRule"/>
</dbReference>
<dbReference type="Gene3D" id="3.30.1360.40">
    <property type="match status" value="1"/>
</dbReference>
<dbReference type="Gene3D" id="1.10.10.10">
    <property type="entry name" value="Winged helix-like DNA-binding domain superfamily/Winged helix DNA-binding domain"/>
    <property type="match status" value="1"/>
</dbReference>
<dbReference type="HAMAP" id="MF_00173">
    <property type="entry name" value="Arg_repressor"/>
    <property type="match status" value="1"/>
</dbReference>
<dbReference type="InterPro" id="IPR001669">
    <property type="entry name" value="Arg_repress"/>
</dbReference>
<dbReference type="InterPro" id="IPR020899">
    <property type="entry name" value="Arg_repress_C"/>
</dbReference>
<dbReference type="InterPro" id="IPR036251">
    <property type="entry name" value="Arg_repress_C_sf"/>
</dbReference>
<dbReference type="InterPro" id="IPR020900">
    <property type="entry name" value="Arg_repress_DNA-bd"/>
</dbReference>
<dbReference type="InterPro" id="IPR036388">
    <property type="entry name" value="WH-like_DNA-bd_sf"/>
</dbReference>
<dbReference type="InterPro" id="IPR036390">
    <property type="entry name" value="WH_DNA-bd_sf"/>
</dbReference>
<dbReference type="NCBIfam" id="TIGR01529">
    <property type="entry name" value="argR_whole"/>
    <property type="match status" value="1"/>
</dbReference>
<dbReference type="NCBIfam" id="NF003281">
    <property type="entry name" value="PRK04280.1"/>
    <property type="match status" value="1"/>
</dbReference>
<dbReference type="PANTHER" id="PTHR34471">
    <property type="entry name" value="ARGININE REPRESSOR"/>
    <property type="match status" value="1"/>
</dbReference>
<dbReference type="PANTHER" id="PTHR34471:SF1">
    <property type="entry name" value="ARGININE REPRESSOR"/>
    <property type="match status" value="1"/>
</dbReference>
<dbReference type="Pfam" id="PF01316">
    <property type="entry name" value="Arg_repressor"/>
    <property type="match status" value="1"/>
</dbReference>
<dbReference type="Pfam" id="PF02863">
    <property type="entry name" value="Arg_repressor_C"/>
    <property type="match status" value="1"/>
</dbReference>
<dbReference type="PRINTS" id="PR01467">
    <property type="entry name" value="ARGREPRESSOR"/>
</dbReference>
<dbReference type="SUPFAM" id="SSF55252">
    <property type="entry name" value="C-terminal domain of arginine repressor"/>
    <property type="match status" value="1"/>
</dbReference>
<dbReference type="SUPFAM" id="SSF46785">
    <property type="entry name" value="Winged helix' DNA-binding domain"/>
    <property type="match status" value="1"/>
</dbReference>
<feature type="chain" id="PRO_0000205117" description="Arginine repressor">
    <location>
        <begin position="1"/>
        <end position="150"/>
    </location>
</feature>
<organism>
    <name type="scientific">Staphylococcus aureus (strain MRSA252)</name>
    <dbReference type="NCBI Taxonomy" id="282458"/>
    <lineage>
        <taxon>Bacteria</taxon>
        <taxon>Bacillati</taxon>
        <taxon>Bacillota</taxon>
        <taxon>Bacilli</taxon>
        <taxon>Bacillales</taxon>
        <taxon>Staphylococcaceae</taxon>
        <taxon>Staphylococcus</taxon>
    </lineage>
</organism>
<name>ARGR_STAAR</name>
<sequence>MPKKSVRHIKIREIISNEQIETQDELVKRLNDYDLNVTQATVSRDIKELQLIKVPIPSGQYVYSLPNDRKFHPLEKLGRYLMDSFVNIDGTDNLLVLKTLPGNAQSIGAILDQINWEEVLGTICGDDTCLIICRSKEASDEIKSRIFNLL</sequence>
<protein>
    <recommendedName>
        <fullName evidence="1">Arginine repressor</fullName>
    </recommendedName>
</protein>
<reference key="1">
    <citation type="journal article" date="2004" name="Proc. Natl. Acad. Sci. U.S.A.">
        <title>Complete genomes of two clinical Staphylococcus aureus strains: evidence for the rapid evolution of virulence and drug resistance.</title>
        <authorList>
            <person name="Holden M.T.G."/>
            <person name="Feil E.J."/>
            <person name="Lindsay J.A."/>
            <person name="Peacock S.J."/>
            <person name="Day N.P.J."/>
            <person name="Enright M.C."/>
            <person name="Foster T.J."/>
            <person name="Moore C.E."/>
            <person name="Hurst L."/>
            <person name="Atkin R."/>
            <person name="Barron A."/>
            <person name="Bason N."/>
            <person name="Bentley S.D."/>
            <person name="Chillingworth C."/>
            <person name="Chillingworth T."/>
            <person name="Churcher C."/>
            <person name="Clark L."/>
            <person name="Corton C."/>
            <person name="Cronin A."/>
            <person name="Doggett J."/>
            <person name="Dowd L."/>
            <person name="Feltwell T."/>
            <person name="Hance Z."/>
            <person name="Harris B."/>
            <person name="Hauser H."/>
            <person name="Holroyd S."/>
            <person name="Jagels K."/>
            <person name="James K.D."/>
            <person name="Lennard N."/>
            <person name="Line A."/>
            <person name="Mayes R."/>
            <person name="Moule S."/>
            <person name="Mungall K."/>
            <person name="Ormond D."/>
            <person name="Quail M.A."/>
            <person name="Rabbinowitsch E."/>
            <person name="Rutherford K.M."/>
            <person name="Sanders M."/>
            <person name="Sharp S."/>
            <person name="Simmonds M."/>
            <person name="Stevens K."/>
            <person name="Whitehead S."/>
            <person name="Barrell B.G."/>
            <person name="Spratt B.G."/>
            <person name="Parkhill J."/>
        </authorList>
    </citation>
    <scope>NUCLEOTIDE SEQUENCE [LARGE SCALE GENOMIC DNA]</scope>
    <source>
        <strain>MRSA252</strain>
    </source>
</reference>
<evidence type="ECO:0000255" key="1">
    <source>
        <dbReference type="HAMAP-Rule" id="MF_00173"/>
    </source>
</evidence>
<keyword id="KW-0028">Amino-acid biosynthesis</keyword>
<keyword id="KW-0055">Arginine biosynthesis</keyword>
<keyword id="KW-0963">Cytoplasm</keyword>
<keyword id="KW-0238">DNA-binding</keyword>
<keyword id="KW-0678">Repressor</keyword>
<keyword id="KW-0804">Transcription</keyword>
<keyword id="KW-0805">Transcription regulation</keyword>
<gene>
    <name evidence="1" type="primary">argR</name>
    <name type="ordered locus">SAR1598</name>
</gene>
<accession>Q6GGH8</accession>
<comment type="function">
    <text evidence="1">Regulates arginine biosynthesis genes.</text>
</comment>
<comment type="pathway">
    <text>Amino-acid biosynthesis; L-arginine biosynthesis [regulation].</text>
</comment>
<comment type="subcellular location">
    <subcellularLocation>
        <location evidence="1">Cytoplasm</location>
    </subcellularLocation>
</comment>
<comment type="similarity">
    <text evidence="1">Belongs to the ArgR family.</text>
</comment>